<reference key="1">
    <citation type="journal article" date="2003" name="Nat. Biotechnol.">
        <title>The genome sequence of the entomopathogenic bacterium Photorhabdus luminescens.</title>
        <authorList>
            <person name="Duchaud E."/>
            <person name="Rusniok C."/>
            <person name="Frangeul L."/>
            <person name="Buchrieser C."/>
            <person name="Givaudan A."/>
            <person name="Taourit S."/>
            <person name="Bocs S."/>
            <person name="Boursaux-Eude C."/>
            <person name="Chandler M."/>
            <person name="Charles J.-F."/>
            <person name="Dassa E."/>
            <person name="Derose R."/>
            <person name="Derzelle S."/>
            <person name="Freyssinet G."/>
            <person name="Gaudriault S."/>
            <person name="Medigue C."/>
            <person name="Lanois A."/>
            <person name="Powell K."/>
            <person name="Siguier P."/>
            <person name="Vincent R."/>
            <person name="Wingate V."/>
            <person name="Zouine M."/>
            <person name="Glaser P."/>
            <person name="Boemare N."/>
            <person name="Danchin A."/>
            <person name="Kunst F."/>
        </authorList>
    </citation>
    <scope>NUCLEOTIDE SEQUENCE [LARGE SCALE GENOMIC DNA]</scope>
    <source>
        <strain>DSM 15139 / CIP 105565 / TT01</strain>
    </source>
</reference>
<comment type="function">
    <text evidence="1">Part of a membrane-bound complex that couples electron transfer with translocation of ions across the membrane.</text>
</comment>
<comment type="subunit">
    <text evidence="1">The complex is composed of six subunits: RnfA, RnfB, RnfC, RnfD, RnfE and RnfG.</text>
</comment>
<comment type="subcellular location">
    <subcellularLocation>
        <location evidence="1">Cell inner membrane</location>
        <topology evidence="1">Multi-pass membrane protein</topology>
    </subcellularLocation>
</comment>
<comment type="similarity">
    <text evidence="1">Belongs to the NqrDE/RnfAE family.</text>
</comment>
<gene>
    <name evidence="1" type="primary">rnfA</name>
    <name type="ordered locus">plu2377</name>
</gene>
<evidence type="ECO:0000255" key="1">
    <source>
        <dbReference type="HAMAP-Rule" id="MF_00459"/>
    </source>
</evidence>
<organism>
    <name type="scientific">Photorhabdus laumondii subsp. laumondii (strain DSM 15139 / CIP 105565 / TT01)</name>
    <name type="common">Photorhabdus luminescens subsp. laumondii</name>
    <dbReference type="NCBI Taxonomy" id="243265"/>
    <lineage>
        <taxon>Bacteria</taxon>
        <taxon>Pseudomonadati</taxon>
        <taxon>Pseudomonadota</taxon>
        <taxon>Gammaproteobacteria</taxon>
        <taxon>Enterobacterales</taxon>
        <taxon>Morganellaceae</taxon>
        <taxon>Photorhabdus</taxon>
    </lineage>
</organism>
<proteinExistence type="inferred from homology"/>
<sequence length="193" mass="20865">MTDYFLLFVGTVLVNNFVLVKFLGLCPFMGVSKKLETAIGMGFATTFVMTLASVCSWLVNTFILLPLDLIYLRTLSFILVIAVVVQFTELVVRKTSPTLYRLLGIFLPLITTNCAVLGVALLNINQSHDFLQSAIYGFGAAAGFSLVMVLFAAIRERLAVADVPAPFKGSSIGLITAGLMSLAFMGFSGLVKF</sequence>
<feature type="chain" id="PRO_1000013537" description="Ion-translocating oxidoreductase complex subunit A">
    <location>
        <begin position="1"/>
        <end position="193"/>
    </location>
</feature>
<feature type="transmembrane region" description="Helical" evidence="1">
    <location>
        <begin position="5"/>
        <end position="25"/>
    </location>
</feature>
<feature type="transmembrane region" description="Helical" evidence="1">
    <location>
        <begin position="39"/>
        <end position="59"/>
    </location>
</feature>
<feature type="transmembrane region" description="Helical" evidence="1">
    <location>
        <begin position="62"/>
        <end position="82"/>
    </location>
</feature>
<feature type="transmembrane region" description="Helical" evidence="1">
    <location>
        <begin position="102"/>
        <end position="122"/>
    </location>
</feature>
<feature type="transmembrane region" description="Helical" evidence="1">
    <location>
        <begin position="134"/>
        <end position="154"/>
    </location>
</feature>
<feature type="transmembrane region" description="Helical" evidence="1">
    <location>
        <begin position="171"/>
        <end position="191"/>
    </location>
</feature>
<name>RNFA_PHOLL</name>
<accession>Q7N4G1</accession>
<dbReference type="EC" id="7.-.-.-" evidence="1"/>
<dbReference type="EMBL" id="BX571867">
    <property type="protein sequence ID" value="CAE14692.1"/>
    <property type="molecule type" value="Genomic_DNA"/>
</dbReference>
<dbReference type="RefSeq" id="WP_011146612.1">
    <property type="nucleotide sequence ID" value="NC_005126.1"/>
</dbReference>
<dbReference type="SMR" id="Q7N4G1"/>
<dbReference type="STRING" id="243265.plu2377"/>
<dbReference type="GeneID" id="88804399"/>
<dbReference type="KEGG" id="plu:plu2377"/>
<dbReference type="eggNOG" id="COG4657">
    <property type="taxonomic scope" value="Bacteria"/>
</dbReference>
<dbReference type="HOGENOM" id="CLU_095255_1_0_6"/>
<dbReference type="OrthoDB" id="9803631at2"/>
<dbReference type="Proteomes" id="UP000002514">
    <property type="component" value="Chromosome"/>
</dbReference>
<dbReference type="GO" id="GO:0005886">
    <property type="term" value="C:plasma membrane"/>
    <property type="evidence" value="ECO:0007669"/>
    <property type="project" value="UniProtKB-SubCell"/>
</dbReference>
<dbReference type="GO" id="GO:0022900">
    <property type="term" value="P:electron transport chain"/>
    <property type="evidence" value="ECO:0007669"/>
    <property type="project" value="UniProtKB-UniRule"/>
</dbReference>
<dbReference type="HAMAP" id="MF_00459">
    <property type="entry name" value="RsxA_RnfA"/>
    <property type="match status" value="1"/>
</dbReference>
<dbReference type="InterPro" id="IPR011293">
    <property type="entry name" value="Ion_transpt_RnfA/RsxA"/>
</dbReference>
<dbReference type="InterPro" id="IPR003667">
    <property type="entry name" value="NqrDE/RnfAE"/>
</dbReference>
<dbReference type="InterPro" id="IPR050133">
    <property type="entry name" value="NqrDE/RnfAE_oxidrdctase"/>
</dbReference>
<dbReference type="NCBIfam" id="NF003481">
    <property type="entry name" value="PRK05151.1"/>
    <property type="match status" value="1"/>
</dbReference>
<dbReference type="NCBIfam" id="TIGR01943">
    <property type="entry name" value="rnfA"/>
    <property type="match status" value="1"/>
</dbReference>
<dbReference type="PANTHER" id="PTHR30335">
    <property type="entry name" value="INTEGRAL MEMBRANE PROTEIN OF SOXR-REDUCING COMPLEX"/>
    <property type="match status" value="1"/>
</dbReference>
<dbReference type="PANTHER" id="PTHR30335:SF0">
    <property type="entry name" value="ION-TRANSLOCATING OXIDOREDUCTASE COMPLEX SUBUNIT A"/>
    <property type="match status" value="1"/>
</dbReference>
<dbReference type="Pfam" id="PF02508">
    <property type="entry name" value="Rnf-Nqr"/>
    <property type="match status" value="1"/>
</dbReference>
<dbReference type="PIRSF" id="PIRSF006102">
    <property type="entry name" value="NQR_DE"/>
    <property type="match status" value="1"/>
</dbReference>
<keyword id="KW-0997">Cell inner membrane</keyword>
<keyword id="KW-1003">Cell membrane</keyword>
<keyword id="KW-0249">Electron transport</keyword>
<keyword id="KW-0472">Membrane</keyword>
<keyword id="KW-1185">Reference proteome</keyword>
<keyword id="KW-1278">Translocase</keyword>
<keyword id="KW-0812">Transmembrane</keyword>
<keyword id="KW-1133">Transmembrane helix</keyword>
<keyword id="KW-0813">Transport</keyword>
<protein>
    <recommendedName>
        <fullName evidence="1">Ion-translocating oxidoreductase complex subunit A</fullName>
        <ecNumber evidence="1">7.-.-.-</ecNumber>
    </recommendedName>
    <alternativeName>
        <fullName evidence="1">Rnf electron transport complex subunit A</fullName>
    </alternativeName>
</protein>